<accession>Q2GG24</accession>
<keyword id="KW-0067">ATP-binding</keyword>
<keyword id="KW-0436">Ligase</keyword>
<keyword id="KW-0547">Nucleotide-binding</keyword>
<keyword id="KW-0648">Protein biosynthesis</keyword>
<keyword id="KW-1185">Reference proteome</keyword>
<protein>
    <recommendedName>
        <fullName evidence="1">Aspartyl/glutamyl-tRNA(Asn/Gln) amidotransferase subunit B</fullName>
        <shortName evidence="1">Asp/Glu-ADT subunit B</shortName>
        <ecNumber evidence="1">6.3.5.-</ecNumber>
    </recommendedName>
</protein>
<gene>
    <name evidence="1" type="primary">gatB</name>
    <name type="ordered locus">ECH_0813</name>
</gene>
<name>GATB_EHRCR</name>
<organism>
    <name type="scientific">Ehrlichia chaffeensis (strain ATCC CRL-10679 / Arkansas)</name>
    <dbReference type="NCBI Taxonomy" id="205920"/>
    <lineage>
        <taxon>Bacteria</taxon>
        <taxon>Pseudomonadati</taxon>
        <taxon>Pseudomonadota</taxon>
        <taxon>Alphaproteobacteria</taxon>
        <taxon>Rickettsiales</taxon>
        <taxon>Anaplasmataceae</taxon>
        <taxon>Ehrlichia</taxon>
    </lineage>
</organism>
<comment type="function">
    <text evidence="1">Allows the formation of correctly charged Asn-tRNA(Asn) or Gln-tRNA(Gln) through the transamidation of misacylated Asp-tRNA(Asn) or Glu-tRNA(Gln) in organisms which lack either or both of asparaginyl-tRNA or glutaminyl-tRNA synthetases. The reaction takes place in the presence of glutamine and ATP through an activated phospho-Asp-tRNA(Asn) or phospho-Glu-tRNA(Gln).</text>
</comment>
<comment type="catalytic activity">
    <reaction evidence="1">
        <text>L-glutamyl-tRNA(Gln) + L-glutamine + ATP + H2O = L-glutaminyl-tRNA(Gln) + L-glutamate + ADP + phosphate + H(+)</text>
        <dbReference type="Rhea" id="RHEA:17521"/>
        <dbReference type="Rhea" id="RHEA-COMP:9681"/>
        <dbReference type="Rhea" id="RHEA-COMP:9684"/>
        <dbReference type="ChEBI" id="CHEBI:15377"/>
        <dbReference type="ChEBI" id="CHEBI:15378"/>
        <dbReference type="ChEBI" id="CHEBI:29985"/>
        <dbReference type="ChEBI" id="CHEBI:30616"/>
        <dbReference type="ChEBI" id="CHEBI:43474"/>
        <dbReference type="ChEBI" id="CHEBI:58359"/>
        <dbReference type="ChEBI" id="CHEBI:78520"/>
        <dbReference type="ChEBI" id="CHEBI:78521"/>
        <dbReference type="ChEBI" id="CHEBI:456216"/>
    </reaction>
</comment>
<comment type="catalytic activity">
    <reaction evidence="1">
        <text>L-aspartyl-tRNA(Asn) + L-glutamine + ATP + H2O = L-asparaginyl-tRNA(Asn) + L-glutamate + ADP + phosphate + 2 H(+)</text>
        <dbReference type="Rhea" id="RHEA:14513"/>
        <dbReference type="Rhea" id="RHEA-COMP:9674"/>
        <dbReference type="Rhea" id="RHEA-COMP:9677"/>
        <dbReference type="ChEBI" id="CHEBI:15377"/>
        <dbReference type="ChEBI" id="CHEBI:15378"/>
        <dbReference type="ChEBI" id="CHEBI:29985"/>
        <dbReference type="ChEBI" id="CHEBI:30616"/>
        <dbReference type="ChEBI" id="CHEBI:43474"/>
        <dbReference type="ChEBI" id="CHEBI:58359"/>
        <dbReference type="ChEBI" id="CHEBI:78515"/>
        <dbReference type="ChEBI" id="CHEBI:78516"/>
        <dbReference type="ChEBI" id="CHEBI:456216"/>
    </reaction>
</comment>
<comment type="subunit">
    <text evidence="1">Heterotrimer of A, B and C subunits.</text>
</comment>
<comment type="similarity">
    <text evidence="1">Belongs to the GatB/GatE family. GatB subfamily.</text>
</comment>
<evidence type="ECO:0000255" key="1">
    <source>
        <dbReference type="HAMAP-Rule" id="MF_00121"/>
    </source>
</evidence>
<reference key="1">
    <citation type="journal article" date="2006" name="PLoS Genet.">
        <title>Comparative genomics of emerging human ehrlichiosis agents.</title>
        <authorList>
            <person name="Dunning Hotopp J.C."/>
            <person name="Lin M."/>
            <person name="Madupu R."/>
            <person name="Crabtree J."/>
            <person name="Angiuoli S.V."/>
            <person name="Eisen J.A."/>
            <person name="Seshadri R."/>
            <person name="Ren Q."/>
            <person name="Wu M."/>
            <person name="Utterback T.R."/>
            <person name="Smith S."/>
            <person name="Lewis M."/>
            <person name="Khouri H."/>
            <person name="Zhang C."/>
            <person name="Niu H."/>
            <person name="Lin Q."/>
            <person name="Ohashi N."/>
            <person name="Zhi N."/>
            <person name="Nelson W.C."/>
            <person name="Brinkac L.M."/>
            <person name="Dodson R.J."/>
            <person name="Rosovitz M.J."/>
            <person name="Sundaram J.P."/>
            <person name="Daugherty S.C."/>
            <person name="Davidsen T."/>
            <person name="Durkin A.S."/>
            <person name="Gwinn M.L."/>
            <person name="Haft D.H."/>
            <person name="Selengut J.D."/>
            <person name="Sullivan S.A."/>
            <person name="Zafar N."/>
            <person name="Zhou L."/>
            <person name="Benahmed F."/>
            <person name="Forberger H."/>
            <person name="Halpin R."/>
            <person name="Mulligan S."/>
            <person name="Robinson J."/>
            <person name="White O."/>
            <person name="Rikihisa Y."/>
            <person name="Tettelin H."/>
        </authorList>
    </citation>
    <scope>NUCLEOTIDE SEQUENCE [LARGE SCALE GENOMIC DNA]</scope>
    <source>
        <strain>ATCC CRL-10679 / Arkansas</strain>
    </source>
</reference>
<sequence length="481" mass="54436">MTIIKGNRCDWEVVIGLEVHAQVISNSKLFSGASTKTYDALPNTQVALFDVAMPGMLPVLNEYCVYQAIKTGIALSCKINKYSAFDRKNYFYPDLPSGYQITQFYYPIATEGKIVLEDHDMKEIRIARIHLEQDAGKSIHEFDKTYIDFNRAGVALMEIVSEPDFRSIEEVAEYLKKLRMILRFIETCDGDMEKGSLRCDANVSVKPVGSSELGIRSEIKNLNSIRYVMQAIEYEANRQVNALENGEIVTQNTLLFDVTSGQTRVIRTKEDAHDYRYFPDPDLFPLKIDDQYIDHVRSSLPELPMQKRERYTNDFSLSKYDADILSSDKDVAIYFEKVAEKHDGKLAASWITGELFGRLNRLGITIGESSVTAEDLIQLLDLIVNNTISGKIAKQVFDMMFESGKSPALIVSEHGLKQVSDENALSVIVERVLKNNASKVVEYKQGKEKLFGYFVGQVMKETQGKANPDMVNSIIKQQLEN</sequence>
<feature type="chain" id="PRO_0000241220" description="Aspartyl/glutamyl-tRNA(Asn/Gln) amidotransferase subunit B">
    <location>
        <begin position="1"/>
        <end position="481"/>
    </location>
</feature>
<proteinExistence type="inferred from homology"/>
<dbReference type="EC" id="6.3.5.-" evidence="1"/>
<dbReference type="EMBL" id="CP000236">
    <property type="protein sequence ID" value="ABD44987.1"/>
    <property type="molecule type" value="Genomic_DNA"/>
</dbReference>
<dbReference type="RefSeq" id="WP_006009779.1">
    <property type="nucleotide sequence ID" value="NC_007799.1"/>
</dbReference>
<dbReference type="SMR" id="Q2GG24"/>
<dbReference type="STRING" id="205920.ECH_0813"/>
<dbReference type="KEGG" id="ech:ECH_0813"/>
<dbReference type="eggNOG" id="COG0064">
    <property type="taxonomic scope" value="Bacteria"/>
</dbReference>
<dbReference type="HOGENOM" id="CLU_019240_0_0_5"/>
<dbReference type="OrthoDB" id="9804078at2"/>
<dbReference type="Proteomes" id="UP000008320">
    <property type="component" value="Chromosome"/>
</dbReference>
<dbReference type="GO" id="GO:0050566">
    <property type="term" value="F:asparaginyl-tRNA synthase (glutamine-hydrolyzing) activity"/>
    <property type="evidence" value="ECO:0007669"/>
    <property type="project" value="RHEA"/>
</dbReference>
<dbReference type="GO" id="GO:0005524">
    <property type="term" value="F:ATP binding"/>
    <property type="evidence" value="ECO:0007669"/>
    <property type="project" value="UniProtKB-KW"/>
</dbReference>
<dbReference type="GO" id="GO:0050567">
    <property type="term" value="F:glutaminyl-tRNA synthase (glutamine-hydrolyzing) activity"/>
    <property type="evidence" value="ECO:0007669"/>
    <property type="project" value="UniProtKB-UniRule"/>
</dbReference>
<dbReference type="GO" id="GO:0070681">
    <property type="term" value="P:glutaminyl-tRNAGln biosynthesis via transamidation"/>
    <property type="evidence" value="ECO:0007669"/>
    <property type="project" value="TreeGrafter"/>
</dbReference>
<dbReference type="GO" id="GO:0006412">
    <property type="term" value="P:translation"/>
    <property type="evidence" value="ECO:0007669"/>
    <property type="project" value="UniProtKB-UniRule"/>
</dbReference>
<dbReference type="FunFam" id="1.10.10.410:FF:000001">
    <property type="entry name" value="Aspartyl/glutamyl-tRNA(Asn/Gln) amidotransferase subunit B"/>
    <property type="match status" value="1"/>
</dbReference>
<dbReference type="Gene3D" id="1.10.10.410">
    <property type="match status" value="1"/>
</dbReference>
<dbReference type="Gene3D" id="1.10.150.380">
    <property type="entry name" value="GatB domain, N-terminal subdomain"/>
    <property type="match status" value="1"/>
</dbReference>
<dbReference type="HAMAP" id="MF_00121">
    <property type="entry name" value="GatB"/>
    <property type="match status" value="1"/>
</dbReference>
<dbReference type="InterPro" id="IPR017959">
    <property type="entry name" value="Asn/Gln-tRNA_amidoTrfase_suB/E"/>
</dbReference>
<dbReference type="InterPro" id="IPR006075">
    <property type="entry name" value="Asn/Gln-tRNA_Trfase_suB/E_cat"/>
</dbReference>
<dbReference type="InterPro" id="IPR018027">
    <property type="entry name" value="Asn/Gln_amidotransferase"/>
</dbReference>
<dbReference type="InterPro" id="IPR003789">
    <property type="entry name" value="Asn/Gln_tRNA_amidoTrase-B-like"/>
</dbReference>
<dbReference type="InterPro" id="IPR004413">
    <property type="entry name" value="GatB"/>
</dbReference>
<dbReference type="InterPro" id="IPR042114">
    <property type="entry name" value="GatB_C_1"/>
</dbReference>
<dbReference type="InterPro" id="IPR023168">
    <property type="entry name" value="GatB_Yqey_C_2"/>
</dbReference>
<dbReference type="InterPro" id="IPR017958">
    <property type="entry name" value="Gln-tRNA_amidoTrfase_suB_CS"/>
</dbReference>
<dbReference type="InterPro" id="IPR014746">
    <property type="entry name" value="Gln_synth/guanido_kin_cat_dom"/>
</dbReference>
<dbReference type="NCBIfam" id="TIGR00133">
    <property type="entry name" value="gatB"/>
    <property type="match status" value="1"/>
</dbReference>
<dbReference type="NCBIfam" id="NF004012">
    <property type="entry name" value="PRK05477.1-2"/>
    <property type="match status" value="1"/>
</dbReference>
<dbReference type="NCBIfam" id="NF004014">
    <property type="entry name" value="PRK05477.1-4"/>
    <property type="match status" value="1"/>
</dbReference>
<dbReference type="NCBIfam" id="NF004015">
    <property type="entry name" value="PRK05477.1-5"/>
    <property type="match status" value="1"/>
</dbReference>
<dbReference type="PANTHER" id="PTHR11659">
    <property type="entry name" value="GLUTAMYL-TRNA GLN AMIDOTRANSFERASE SUBUNIT B MITOCHONDRIAL AND PROKARYOTIC PET112-RELATED"/>
    <property type="match status" value="1"/>
</dbReference>
<dbReference type="PANTHER" id="PTHR11659:SF0">
    <property type="entry name" value="GLUTAMYL-TRNA(GLN) AMIDOTRANSFERASE SUBUNIT B, MITOCHONDRIAL"/>
    <property type="match status" value="1"/>
</dbReference>
<dbReference type="Pfam" id="PF02934">
    <property type="entry name" value="GatB_N"/>
    <property type="match status" value="1"/>
</dbReference>
<dbReference type="Pfam" id="PF02637">
    <property type="entry name" value="GatB_Yqey"/>
    <property type="match status" value="1"/>
</dbReference>
<dbReference type="SMART" id="SM00845">
    <property type="entry name" value="GatB_Yqey"/>
    <property type="match status" value="1"/>
</dbReference>
<dbReference type="SUPFAM" id="SSF89095">
    <property type="entry name" value="GatB/YqeY motif"/>
    <property type="match status" value="1"/>
</dbReference>
<dbReference type="SUPFAM" id="SSF55931">
    <property type="entry name" value="Glutamine synthetase/guanido kinase"/>
    <property type="match status" value="1"/>
</dbReference>
<dbReference type="PROSITE" id="PS01234">
    <property type="entry name" value="GATB"/>
    <property type="match status" value="1"/>
</dbReference>